<dbReference type="EC" id="2.4.2.-" evidence="13"/>
<dbReference type="EMBL" id="DQ447746">
    <property type="protein sequence ID" value="ABE27142.1"/>
    <property type="molecule type" value="Genomic_DNA"/>
</dbReference>
<dbReference type="EMBL" id="DQ447747">
    <property type="protein sequence ID" value="ABE27143.1"/>
    <property type="molecule type" value="Genomic_DNA"/>
</dbReference>
<dbReference type="EMBL" id="DQ447748">
    <property type="protein sequence ID" value="ABE27144.1"/>
    <property type="molecule type" value="Genomic_DNA"/>
</dbReference>
<dbReference type="EMBL" id="DQ447749">
    <property type="protein sequence ID" value="ABE27145.1"/>
    <property type="molecule type" value="Genomic_DNA"/>
</dbReference>
<dbReference type="EMBL" id="DQ447750">
    <property type="protein sequence ID" value="ABE27146.1"/>
    <property type="molecule type" value="Genomic_DNA"/>
</dbReference>
<dbReference type="EMBL" id="U00089">
    <property type="protein sequence ID" value="AAB96112.1"/>
    <property type="molecule type" value="Genomic_DNA"/>
</dbReference>
<dbReference type="PIR" id="S73790">
    <property type="entry name" value="S73790"/>
</dbReference>
<dbReference type="RefSeq" id="NP_110060.1">
    <property type="nucleotide sequence ID" value="NC_000912.1"/>
</dbReference>
<dbReference type="RefSeq" id="WP_010874728.1">
    <property type="nucleotide sequence ID" value="NC_000912.1"/>
</dbReference>
<dbReference type="PDB" id="4TLV">
    <property type="method" value="X-ray"/>
    <property type="resolution" value="1.90 A"/>
    <property type="chains" value="A/B/C/D/E/F=1-591"/>
</dbReference>
<dbReference type="PDB" id="4TLW">
    <property type="method" value="X-ray"/>
    <property type="resolution" value="2.55 A"/>
    <property type="chains" value="A=1-591"/>
</dbReference>
<dbReference type="PDBsum" id="4TLV"/>
<dbReference type="PDBsum" id="4TLW"/>
<dbReference type="SMR" id="P75409"/>
<dbReference type="IntAct" id="P75409">
    <property type="interactions" value="2"/>
</dbReference>
<dbReference type="STRING" id="272634.MPN_372"/>
<dbReference type="EnsemblBacteria" id="AAB96112">
    <property type="protein sequence ID" value="AAB96112"/>
    <property type="gene ID" value="MPN_372"/>
</dbReference>
<dbReference type="KEGG" id="mpn:MPN_372"/>
<dbReference type="PATRIC" id="fig|272634.6.peg.403"/>
<dbReference type="HOGENOM" id="CLU_423249_0_0_14"/>
<dbReference type="OrthoDB" id="394356at2"/>
<dbReference type="BioCyc" id="MPNE272634:G1GJ3-586-MONOMER"/>
<dbReference type="EvolutionaryTrace" id="P75409"/>
<dbReference type="Proteomes" id="UP000000808">
    <property type="component" value="Chromosome"/>
</dbReference>
<dbReference type="GO" id="GO:0033099">
    <property type="term" value="C:attachment organelle"/>
    <property type="evidence" value="ECO:0007669"/>
    <property type="project" value="UniProtKB-SubCell"/>
</dbReference>
<dbReference type="GO" id="GO:0042995">
    <property type="term" value="C:cell projection"/>
    <property type="evidence" value="ECO:0007669"/>
    <property type="project" value="UniProtKB-KW"/>
</dbReference>
<dbReference type="GO" id="GO:0009986">
    <property type="term" value="C:cell surface"/>
    <property type="evidence" value="ECO:0000314"/>
    <property type="project" value="AgBase"/>
</dbReference>
<dbReference type="GO" id="GO:0005737">
    <property type="term" value="C:cytoplasm"/>
    <property type="evidence" value="ECO:0007669"/>
    <property type="project" value="UniProtKB-SubCell"/>
</dbReference>
<dbReference type="GO" id="GO:0005576">
    <property type="term" value="C:extracellular region"/>
    <property type="evidence" value="ECO:0007669"/>
    <property type="project" value="InterPro"/>
</dbReference>
<dbReference type="GO" id="GO:0044164">
    <property type="term" value="C:host cell cytosol"/>
    <property type="evidence" value="ECO:0007669"/>
    <property type="project" value="UniProtKB-SubCell"/>
</dbReference>
<dbReference type="GO" id="GO:0044165">
    <property type="term" value="C:host cell endoplasmic reticulum"/>
    <property type="evidence" value="ECO:0007669"/>
    <property type="project" value="UniProtKB-SubCell"/>
</dbReference>
<dbReference type="GO" id="GO:0005886">
    <property type="term" value="C:plasma membrane"/>
    <property type="evidence" value="ECO:0007669"/>
    <property type="project" value="UniProtKB-SubCell"/>
</dbReference>
<dbReference type="GO" id="GO:0008289">
    <property type="term" value="F:lipid binding"/>
    <property type="evidence" value="ECO:0007669"/>
    <property type="project" value="UniProtKB-KW"/>
</dbReference>
<dbReference type="GO" id="GO:0003950">
    <property type="term" value="F:NAD+ poly-ADP-ribosyltransferase activity"/>
    <property type="evidence" value="ECO:0007669"/>
    <property type="project" value="InterPro"/>
</dbReference>
<dbReference type="GO" id="GO:0016779">
    <property type="term" value="F:nucleotidyltransferase activity"/>
    <property type="evidence" value="ECO:0007669"/>
    <property type="project" value="UniProtKB-KW"/>
</dbReference>
<dbReference type="GO" id="GO:0090729">
    <property type="term" value="F:toxin activity"/>
    <property type="evidence" value="ECO:0007669"/>
    <property type="project" value="UniProtKB-KW"/>
</dbReference>
<dbReference type="GO" id="GO:0141079">
    <property type="term" value="P:symbiont-mediated activation of host inflammasome-mediated signal transduction"/>
    <property type="evidence" value="ECO:0000269"/>
    <property type="project" value="SigSci"/>
</dbReference>
<dbReference type="GO" id="GO:0044075">
    <property type="term" value="P:symbiont-mediated perturbation of host vacuole organization"/>
    <property type="evidence" value="ECO:0000315"/>
    <property type="project" value="AgBase"/>
</dbReference>
<dbReference type="Gene3D" id="3.90.210.10">
    <property type="entry name" value="Heat-Labile Enterotoxin, subunit A"/>
    <property type="match status" value="1"/>
</dbReference>
<dbReference type="InterPro" id="IPR003898">
    <property type="entry name" value="Borpert_toxA"/>
</dbReference>
<dbReference type="InterPro" id="IPR055043">
    <property type="entry name" value="CARDS-D2"/>
</dbReference>
<dbReference type="InterPro" id="IPR055042">
    <property type="entry name" value="CARDS_D3"/>
</dbReference>
<dbReference type="Pfam" id="PF22509">
    <property type="entry name" value="CARDS-D2_trefoil"/>
    <property type="match status" value="1"/>
</dbReference>
<dbReference type="Pfam" id="PF22346">
    <property type="entry name" value="CARDS_D3"/>
    <property type="match status" value="1"/>
</dbReference>
<dbReference type="Pfam" id="PF02917">
    <property type="entry name" value="Pertussis_S1"/>
    <property type="match status" value="1"/>
</dbReference>
<dbReference type="SUPFAM" id="SSF56399">
    <property type="entry name" value="ADP-ribosylation"/>
    <property type="match status" value="1"/>
</dbReference>
<name>CARDS_MYCPN</name>
<keyword id="KW-0002">3D-structure</keyword>
<keyword id="KW-1003">Cell membrane</keyword>
<keyword id="KW-0966">Cell projection</keyword>
<keyword id="KW-0963">Cytoplasm</keyword>
<keyword id="KW-1015">Disulfide bond</keyword>
<keyword id="KW-0328">Glycosyltransferase</keyword>
<keyword id="KW-1035">Host cytoplasm</keyword>
<keyword id="KW-1038">Host endoplasmic reticulum</keyword>
<keyword id="KW-0446">Lipid-binding</keyword>
<keyword id="KW-0472">Membrane</keyword>
<keyword id="KW-0520">NAD</keyword>
<keyword id="KW-0548">Nucleotidyltransferase</keyword>
<keyword id="KW-1185">Reference proteome</keyword>
<keyword id="KW-0800">Toxin</keyword>
<keyword id="KW-0808">Transferase</keyword>
<keyword id="KW-0843">Virulence</keyword>
<gene>
    <name evidence="16" type="primary">cards</name>
    <name type="ordered locus">MPN_372</name>
    <name type="ORF">MP464</name>
</gene>
<reference key="1">
    <citation type="journal article" date="2006" name="Proc. Natl. Acad. Sci. U.S.A.">
        <title>ADP-ribosylating and vacuolating cytotoxin of Mycoplasma pneumoniae represents unique virulence determinant among bacterial pathogens.</title>
        <authorList>
            <person name="Kannan T.R."/>
            <person name="Baseman J.B."/>
        </authorList>
    </citation>
    <scope>NUCLEOTIDE SEQUENCE [GENOMIC DNA]</scope>
    <scope>FUNCTION AS AN ADP-RIBOSYLTRANSFERASE</scope>
    <scope>ACTIVITY REGULATION</scope>
    <scope>SUBCELLULAR LOCATION</scope>
    <scope>VIRULENCE</scope>
    <scope>MUTAGENESIS OF GLU-132</scope>
    <source>
        <strain>ATCC 29342 / M129 / Subtype 1</strain>
        <strain>JL</strain>
        <strain>L2</strain>
        <strain>RJL1</strain>
        <strain>S1 / Subtype 2</strain>
    </source>
</reference>
<reference key="2">
    <citation type="journal article" date="1996" name="Nucleic Acids Res.">
        <title>Complete sequence analysis of the genome of the bacterium Mycoplasma pneumoniae.</title>
        <authorList>
            <person name="Himmelreich R."/>
            <person name="Hilbert H."/>
            <person name="Plagens H."/>
            <person name="Pirkl E."/>
            <person name="Li B.-C."/>
            <person name="Herrmann R."/>
        </authorList>
    </citation>
    <scope>NUCLEOTIDE SEQUENCE [LARGE SCALE GENOMIC DNA]</scope>
    <source>
        <strain>ATCC 29342 / M129 / Subtype 1</strain>
    </source>
</reference>
<reference key="3">
    <citation type="journal article" date="2005" name="Infect. Immun.">
        <title>Identification and characterization of human surfactant protein A binding protein of Mycoplasma pneumoniae.</title>
        <authorList>
            <person name="Kannan T.R."/>
            <person name="Provenzano D."/>
            <person name="Wright J.R."/>
            <person name="Baseman J.B."/>
        </authorList>
    </citation>
    <scope>IDENTIFICATION BY MASS SPECTROMETRY</scope>
    <scope>INTERACTION WITH HUMAN SFTPA</scope>
    <scope>SUBCELLULAR LOCATION</scope>
    <scope>PROBABLE RECEPTOR</scope>
    <source>
        <strain>B9</strain>
        <strain>S1 / type 2</strain>
    </source>
</reference>
<reference key="4">
    <citation type="journal article" date="2009" name="PLoS ONE">
        <title>Analysis of pulmonary inflammation and function in the mouse and baboon after exposure to Mycoplasma pneumoniae CARDS toxin.</title>
        <authorList>
            <person name="Hardy R.D."/>
            <person name="Coalson J.J."/>
            <person name="Peters J."/>
            <person name="Chaparro A."/>
            <person name="Techasaensiri C."/>
            <person name="Giavedoni L.D."/>
            <person name="Cantwell A.M."/>
            <person name="Kannan T.R."/>
            <person name="Baseman J.B."/>
            <person name="Dube P.H."/>
        </authorList>
    </citation>
    <scope>FUNCTION</scope>
    <source>
        <strain>S1 / Subtype 2</strain>
    </source>
</reference>
<reference key="5">
    <citation type="online journal article" date="2009" name="PLoS ONE 4:e7562-e7562">
        <authorList>
            <person name="Hardy R.D."/>
            <person name="Coalson J.J."/>
            <person name="Peters J."/>
            <person name="Chaparro A."/>
            <person name="Techasaensiri C."/>
            <person name="Giavedoni L.D."/>
            <person name="Cantwell A.M."/>
            <person name="Kannan T.R."/>
            <person name="Baseman J.B."/>
            <person name="Dube P.H."/>
        </authorList>
    </citation>
    <scope>ERRATUM OF PUBMED:19859545</scope>
</reference>
<reference key="6">
    <citation type="journal article" date="2010" name="Mol. Microbiol.">
        <title>Mycoplasma pneumoniae Community Acquired Respiratory Distress Syndrome toxin expression reveals growth phase and infection-dependent regulation.</title>
        <authorList>
            <person name="Kannan T.R."/>
            <person name="Musatovova O."/>
            <person name="Balasubramanian S."/>
            <person name="Cagle M."/>
            <person name="Jordan J.L."/>
            <person name="Krunkosky T.M."/>
            <person name="Davis A."/>
            <person name="Hardy R.D."/>
            <person name="Baseman J.B."/>
        </authorList>
    </citation>
    <scope>SUBCELLULAR LOCATION</scope>
    <scope>INDUCTION</scope>
    <source>
        <strain>S1 / Subtype 2</strain>
    </source>
</reference>
<reference key="7">
    <citation type="journal article" date="2010" name="Am. J. Respir. Crit. Care Med.">
        <title>Variation in colonization, ADP-ribosylating and vacuolating cytotoxin, and pulmonary disease severity among mycoplasma pneumoniae strains.</title>
        <authorList>
            <person name="Techasaensiri C."/>
            <person name="Tagliabue C."/>
            <person name="Cagle M."/>
            <person name="Iranpour P."/>
            <person name="Katz K."/>
            <person name="Kannan T.R."/>
            <person name="Coalson J.J."/>
            <person name="Baseman J.B."/>
            <person name="Hardy R.D."/>
        </authorList>
    </citation>
    <scope>STRAIN VARIATION</scope>
    <scope>INDUCTION</scope>
    <source>
        <strain>ATCC 29342 / M129-B7 / Subtype 1</strain>
        <strain>M129-B9 / Subtype 1</strain>
        <strain>S1 / Subtype 2</strain>
    </source>
</reference>
<reference key="8">
    <citation type="journal article" date="2010" name="Appl. Environ. Microbiol.">
        <title>Targeted chromosomal knockouts in Mycoplasma pneumoniae.</title>
        <authorList>
            <person name="Krishnakumar R."/>
            <person name="Assad-Garcia N."/>
            <person name="Benders G.A."/>
            <person name="Phan Q."/>
            <person name="Montague M.G."/>
            <person name="Glass J.I."/>
        </authorList>
    </citation>
    <scope>DISRUPTION PHENOTYPE</scope>
    <source>
        <strain>ATCC 15531 / FH / Subtype 2</strain>
    </source>
</reference>
<reference key="9">
    <citation type="journal article" date="2013" name="PLoS ONE">
        <title>Mycoplasma pneumoniae CARDS toxin is internalized via clathrin-mediated endocytosis.</title>
        <authorList>
            <person name="Krishnan M."/>
            <person name="Kannan T.R."/>
            <person name="Baseman J.B."/>
        </authorList>
    </citation>
    <scope>HOST CELL UPTAKE</scope>
</reference>
<reference key="10">
    <citation type="journal article" date="2014" name="Mol. Microbiol.">
        <title>Functional mapping of community-acquired respiratory distress syndrome (CARDS) toxin of Mycoplasma pneumoniae defines regions with ADP-ribosyltransferase, vacuolating and receptor-binding activities.</title>
        <authorList>
            <person name="Kannan T.R."/>
            <person name="Krishnan M."/>
            <person name="Ramasamy K."/>
            <person name="Becker A."/>
            <person name="Pakhomova O.N."/>
            <person name="Hart P.J."/>
            <person name="Baseman J.B."/>
        </authorList>
    </citation>
    <scope>FUNCTION AS AN ADP-RIBOSYLTRANSFERASE</scope>
    <scope>DOMAIN</scope>
    <scope>MUTAGENESIS OF ARG-10; HIS-36; GLU-132 AND 551-ASP--PHE-591</scope>
</reference>
<reference key="11">
    <citation type="journal article" date="2014" name="MBio">
        <title>Annexin A2 mediates Mycoplasma pneumoniae community-acquired respiratory distress syndrome toxin binding to eukaryotic cells.</title>
        <authorList>
            <person name="Somarajan S.R."/>
            <person name="Al-Asadi F."/>
            <person name="Ramasamy K."/>
            <person name="Pandranki L."/>
            <person name="Baseman J.B."/>
            <person name="Kannan T.R."/>
        </authorList>
    </citation>
    <scope>INTERACTION WITH HUMAN ANXA2</scope>
    <scope>PROBABLE RECEPTOR</scope>
    <scope>DOMAIN</scope>
</reference>
<reference key="12">
    <citation type="journal article" date="2014" name="MBio">
        <title>ADP-ribosylation of NLRP3 by Mycoplasma pneumoniae CARDS toxin regulates inflammasome activity.</title>
        <authorList>
            <person name="Bose S."/>
            <person name="Segovia J.A."/>
            <person name="Somarajan S.R."/>
            <person name="Chang T.H."/>
            <person name="Kannan T.R."/>
            <person name="Baseman J.B."/>
        </authorList>
    </citation>
    <scope>FUNCTION AS AN ADP-RIBOSYLTRANSFERASE</scope>
    <scope>FUNCTION IN INFLAMMASOME ACTIVATION</scope>
    <scope>INTERACTION WITH HUMAN NLRP3</scope>
    <scope>HOST SUBCELLULAR LOCATION</scope>
    <scope>MUTAGENESIS OF GLU-132</scope>
</reference>
<reference key="13">
    <citation type="journal article" date="2018" name="MBio">
        <title>Mycoplasma pneumoniae Community-Acquired Respiratory Distress Syndrome Toxin Uses a Novel KELED Sequence for Retrograde Transport and Subsequent Cytotoxicity.</title>
        <authorList>
            <person name="Ramasamy K."/>
            <person name="Balasubramanian S."/>
            <person name="Manickam K."/>
            <person name="Pandranki L."/>
            <person name="Taylor A.B."/>
            <person name="Hart P.J."/>
            <person name="Baseman J.B."/>
            <person name="Kannan T.R."/>
        </authorList>
    </citation>
    <scope>FUNCTION AS AN ADP-RIBOSYLTRANSFERASE</scope>
    <scope>HOST CELL TRAFFICKING</scope>
    <scope>HOST SUBCELLULAR LOCATION</scope>
    <scope>KELED MOTIF</scope>
    <scope>MUTAGENESIS OF GLU-132; GLU-269; GLU-271 AND 269-GLU--GLU-271</scope>
</reference>
<reference key="14">
    <citation type="journal article" date="2019" name="Cell. Microbiol.">
        <title>Disulfide bond of Mycoplasma pneumoniae community-acquired respiratory distress syndrome toxin is essential to maintain the ADP-ribosylating and vacuolating activities.</title>
        <authorList>
            <person name="Balasubramanian S."/>
            <person name="Pandranki L."/>
            <person name="Maupin S."/>
            <person name="Ramasamy K."/>
            <person name="Taylor A.B."/>
            <person name="Hart P.J."/>
            <person name="Baseman J.B."/>
            <person name="Kannan T.R."/>
        </authorList>
    </citation>
    <scope>FUNCTION AS AN ADP-RIBOSYLTRANSFERASE</scope>
    <scope>PROCESSING IN VIVO</scope>
    <scope>DISULFIDE BOND</scope>
    <scope>MUTAGENESIS OF CYS-230 AND CYS-247</scope>
</reference>
<reference key="15">
    <citation type="journal article" date="2021" name="Sci. Rep.">
        <title>Mycoplasma pneumoniae CARDS toxin exploits host cell endosomal acidic pH and vacuolar ATPase proton pump to execute its biological activities.</title>
        <authorList>
            <person name="Ramasamy K."/>
            <person name="Balasubramanian S."/>
            <person name="Kirkpatrick A."/>
            <person name="Szabo D."/>
            <person name="Pandranki L."/>
            <person name="Baseman J.B."/>
            <person name="Kannan T.R."/>
        </authorList>
    </citation>
    <scope>FUNCTION IN VACUOLIZATION</scope>
    <scope>SUBCELLULAR LOCATION</scope>
    <scope>DOMAIN</scope>
    <scope>IN VIVO CLEAVAGE</scope>
    <scope>MUTAGENESIS OF 269-GLU--GLU-271</scope>
</reference>
<reference evidence="23 24" key="16">
    <citation type="journal article" date="2015" name="Proc. Natl. Acad. Sci. U.S.A.">
        <title>Structure of CARDS toxin, a unique ADP-ribosylating and vacuolating cytotoxin from Mycoplasma pneumoniae.</title>
        <authorList>
            <person name="Becker A."/>
            <person name="Kannan T.R."/>
            <person name="Taylor A.B."/>
            <person name="Pakhomova O.N."/>
            <person name="Zhang Y."/>
            <person name="Somarajan S.R."/>
            <person name="Galaleldeen A."/>
            <person name="Holloway S.P."/>
            <person name="Baseman J.B."/>
            <person name="Hart P.J."/>
        </authorList>
    </citation>
    <scope>X-RAY CRYSTALLOGRAPHY (1.90 ANGSTROMS)</scope>
    <scope>SUBUNIT</scope>
    <scope>DOMAIN</scope>
    <scope>LIPID-BINDING</scope>
    <scope>PROBABLE DISULFIDE BOND</scope>
    <scope>MUTAGENESIS OF 571-TYR--PHE-591</scope>
    <source>
        <strain>ATCC 29342 / M129 / Subtype 1</strain>
    </source>
</reference>
<evidence type="ECO:0000269" key="1">
    <source>
    </source>
</evidence>
<evidence type="ECO:0000269" key="2">
    <source>
    </source>
</evidence>
<evidence type="ECO:0000269" key="3">
    <source>
    </source>
</evidence>
<evidence type="ECO:0000269" key="4">
    <source>
    </source>
</evidence>
<evidence type="ECO:0000269" key="5">
    <source>
    </source>
</evidence>
<evidence type="ECO:0000269" key="6">
    <source>
    </source>
</evidence>
<evidence type="ECO:0000269" key="7">
    <source>
    </source>
</evidence>
<evidence type="ECO:0000269" key="8">
    <source>
    </source>
</evidence>
<evidence type="ECO:0000269" key="9">
    <source>
    </source>
</evidence>
<evidence type="ECO:0000269" key="10">
    <source>
    </source>
</evidence>
<evidence type="ECO:0000269" key="11">
    <source>
    </source>
</evidence>
<evidence type="ECO:0000269" key="12">
    <source>
    </source>
</evidence>
<evidence type="ECO:0000269" key="13">
    <source>
    </source>
</evidence>
<evidence type="ECO:0000269" key="14">
    <source>
    </source>
</evidence>
<evidence type="ECO:0000303" key="15">
    <source>
    </source>
</evidence>
<evidence type="ECO:0000303" key="16">
    <source>
    </source>
</evidence>
<evidence type="ECO:0000305" key="17"/>
<evidence type="ECO:0000305" key="18">
    <source>
    </source>
</evidence>
<evidence type="ECO:0000305" key="19">
    <source>
    </source>
</evidence>
<evidence type="ECO:0000305" key="20">
    <source>
    </source>
</evidence>
<evidence type="ECO:0000312" key="21">
    <source>
        <dbReference type="PDB" id="4TLV"/>
    </source>
</evidence>
<evidence type="ECO:0000312" key="22">
    <source>
        <dbReference type="PDB" id="4TLW"/>
    </source>
</evidence>
<evidence type="ECO:0007744" key="23">
    <source>
        <dbReference type="PDB" id="4TLV"/>
    </source>
</evidence>
<evidence type="ECO:0007744" key="24">
    <source>
        <dbReference type="PDB" id="4TLW"/>
    </source>
</evidence>
<evidence type="ECO:0007829" key="25">
    <source>
        <dbReference type="PDB" id="4TLV"/>
    </source>
</evidence>
<evidence type="ECO:0007829" key="26">
    <source>
        <dbReference type="PDB" id="4TLW"/>
    </source>
</evidence>
<organism>
    <name type="scientific">Mycoplasma pneumoniae (strain ATCC 29342 / M129 / Subtype 1)</name>
    <name type="common">Mycoplasmoides pneumoniae</name>
    <dbReference type="NCBI Taxonomy" id="272634"/>
    <lineage>
        <taxon>Bacteria</taxon>
        <taxon>Bacillati</taxon>
        <taxon>Mycoplasmatota</taxon>
        <taxon>Mycoplasmoidales</taxon>
        <taxon>Mycoplasmoidaceae</taxon>
        <taxon>Mycoplasmoides</taxon>
    </lineage>
</organism>
<accession>P75409</accession>
<accession>Q1PD42</accession>
<accession>Q1PD43</accession>
<accession>Q1PD44</accession>
<accession>Q1PD45</accession>
<accession>Q1PD46</accession>
<feature type="chain" id="PRO_0000210665" description="ADP-ribosylating toxin CARDS">
    <location>
        <begin position="1"/>
        <end position="591"/>
    </location>
</feature>
<feature type="region of interest" description="Mono-ADP ribosyltransferase (mART) domain" evidence="11">
    <location>
        <begin position="1"/>
        <end position="205"/>
    </location>
</feature>
<feature type="region of interest" description="NAD(+)-binding pocket" evidence="20">
    <location>
        <begin position="206"/>
        <end position="256"/>
    </location>
</feature>
<feature type="region of interest" description="D2 domain" evidence="11">
    <location>
        <begin position="273"/>
        <end position="439"/>
    </location>
</feature>
<feature type="region of interest" description="D3 domain" evidence="11">
    <location>
        <begin position="440"/>
        <end position="591"/>
    </location>
</feature>
<feature type="short sequence motif" description="KELED motif, involved in host ER trafficking, solvent exposed in the crystal structure" evidence="12 21 22">
    <location>
        <begin position="268"/>
        <end position="272"/>
    </location>
</feature>
<feature type="disulfide bond" evidence="11 13 23 24">
    <location>
        <begin position="230"/>
        <end position="247"/>
    </location>
</feature>
<feature type="sequence variant" description="In strain: S1 / subtype 2.">
    <original>L</original>
    <variation>P</variation>
    <location>
        <position position="38"/>
    </location>
</feature>
<feature type="sequence variant" description="In strain: L2.">
    <original>D</original>
    <variation>G</variation>
    <location>
        <position position="245"/>
    </location>
</feature>
<feature type="sequence variant" description="In strain: S1 / subtype 2.">
    <original>S</original>
    <variation>P</variation>
    <location>
        <position position="308"/>
    </location>
</feature>
<feature type="sequence variant" description="In strain: S1 / subtype 2, L2, RJL1 and JL.">
    <original>I</original>
    <variation>S</variation>
    <location>
        <position position="371"/>
    </location>
</feature>
<feature type="sequence variant" description="In strain: S1 / subtype 2.">
    <original>F</original>
    <variation>S</variation>
    <location>
        <position position="391"/>
    </location>
</feature>
<feature type="sequence variant" description="In strain: RJL1.">
    <original>W</original>
    <variation>R</variation>
    <location>
        <position position="392"/>
    </location>
</feature>
<feature type="mutagenesis site" description="Loss of ADP-ribosylating activity. No change in binding to HeLa cells." evidence="8">
    <original>R</original>
    <variation>A</variation>
    <location>
        <position position="10"/>
    </location>
</feature>
<feature type="mutagenesis site" description="Loss of ADP-ribosylating activity. No change in binding to HeLa cells." evidence="8">
    <original>H</original>
    <variation>A</variation>
    <location>
        <position position="36"/>
    </location>
</feature>
<feature type="mutagenesis site" description="Reduces ADP-ribosylation activity. Unable to elicit vacuolization in CHO cells at 5 ug/ml. Loss of ADP-ribosylating activity. No change in binding to HeLa cells. No longer activates host macrophage NLRP3 inflammasome to release interleukin-1-beta (IL-1 beta), decreased maturation of pro-IL-1 beta." evidence="2 8 10 12">
    <original>E</original>
    <variation>A</variation>
    <location>
        <position position="132"/>
    </location>
</feature>
<feature type="mutagenesis site" description="Still has ADPR activity in vivo, no longer vacuolates HeLa cells. Binds to and is internalized by HeLa cells. Not processed in HeLa cells, increased susceptibility of mART domain to protease." evidence="13">
    <original>C</original>
    <variation>S</variation>
    <location>
        <position position="230"/>
    </location>
</feature>
<feature type="mutagenesis site" description="Still has ADPR activity in vivo, no longer vacuolates HeLa cells. Protein is prone to increased proteolysis." evidence="13">
    <original>C</original>
    <variation>S</variation>
    <location>
        <position position="247"/>
    </location>
</feature>
<feature type="mutagenesis site" description="Altered host intracellular trafficking, does not reach the endoplasmic reticulum by retrograde transport, does not induce IL-1 beta release or vacuolization in host cells, no change in in vitro ADP-ribosylation. No toxin processing in host cells." evidence="12 14">
    <original>ELE</original>
    <variation>ALA</variation>
    <location>
        <begin position="269"/>
        <end position="271"/>
    </location>
</feature>
<feature type="mutagenesis site" description="No change in host intracellular trafficking." evidence="12">
    <original>E</original>
    <variation>A</variation>
    <location>
        <position position="269"/>
    </location>
</feature>
<feature type="mutagenesis site" description="No change in host intracellular trafficking." evidence="12">
    <original>E</original>
    <variation>A</variation>
    <location>
        <position position="271"/>
    </location>
</feature>
<feature type="mutagenesis site" description="Not internalized by HeLa cells." evidence="8">
    <location>
        <begin position="551"/>
        <end position="591"/>
    </location>
</feature>
<feature type="mutagenesis site" description="No longer binds to HeLa cells, is not internalized." evidence="11">
    <location>
        <begin position="571"/>
        <end position="591"/>
    </location>
</feature>
<feature type="strand" evidence="25">
    <location>
        <begin position="7"/>
        <end position="14"/>
    </location>
</feature>
<feature type="helix" evidence="25">
    <location>
        <begin position="16"/>
        <end position="22"/>
    </location>
</feature>
<feature type="helix" evidence="25">
    <location>
        <begin position="33"/>
        <end position="38"/>
    </location>
</feature>
<feature type="turn" evidence="25">
    <location>
        <begin position="39"/>
        <end position="41"/>
    </location>
</feature>
<feature type="strand" evidence="25">
    <location>
        <begin position="45"/>
        <end position="53"/>
    </location>
</feature>
<feature type="helix" evidence="25">
    <location>
        <begin position="54"/>
        <end position="58"/>
    </location>
</feature>
<feature type="helix" evidence="25">
    <location>
        <begin position="59"/>
        <end position="62"/>
    </location>
</feature>
<feature type="strand" evidence="25">
    <location>
        <begin position="65"/>
        <end position="68"/>
    </location>
</feature>
<feature type="strand" evidence="25">
    <location>
        <begin position="74"/>
        <end position="82"/>
    </location>
</feature>
<feature type="strand" evidence="25">
    <location>
        <begin position="87"/>
        <end position="89"/>
    </location>
</feature>
<feature type="helix" evidence="25">
    <location>
        <begin position="90"/>
        <end position="102"/>
    </location>
</feature>
<feature type="strand" evidence="25">
    <location>
        <begin position="106"/>
        <end position="111"/>
    </location>
</feature>
<feature type="helix" evidence="25">
    <location>
        <begin position="113"/>
        <end position="124"/>
    </location>
</feature>
<feature type="turn" evidence="25">
    <location>
        <begin position="125"/>
        <end position="127"/>
    </location>
</feature>
<feature type="helix" evidence="25">
    <location>
        <begin position="128"/>
        <end position="130"/>
    </location>
</feature>
<feature type="strand" evidence="25">
    <location>
        <begin position="132"/>
        <end position="137"/>
    </location>
</feature>
<feature type="helix" evidence="25">
    <location>
        <begin position="141"/>
        <end position="143"/>
    </location>
</feature>
<feature type="strand" evidence="25">
    <location>
        <begin position="144"/>
        <end position="156"/>
    </location>
</feature>
<feature type="turn" evidence="25">
    <location>
        <begin position="157"/>
        <end position="159"/>
    </location>
</feature>
<feature type="helix" evidence="25">
    <location>
        <begin position="163"/>
        <end position="165"/>
    </location>
</feature>
<feature type="strand" evidence="25">
    <location>
        <begin position="169"/>
        <end position="173"/>
    </location>
</feature>
<feature type="strand" evidence="25">
    <location>
        <begin position="197"/>
        <end position="200"/>
    </location>
</feature>
<feature type="strand" evidence="25">
    <location>
        <begin position="204"/>
        <end position="208"/>
    </location>
</feature>
<feature type="strand" evidence="25">
    <location>
        <begin position="211"/>
        <end position="217"/>
    </location>
</feature>
<feature type="helix" evidence="25">
    <location>
        <begin position="226"/>
        <end position="229"/>
    </location>
</feature>
<feature type="helix" evidence="25">
    <location>
        <begin position="243"/>
        <end position="246"/>
    </location>
</feature>
<feature type="strand" evidence="25">
    <location>
        <begin position="249"/>
        <end position="256"/>
    </location>
</feature>
<feature type="helix" evidence="25">
    <location>
        <begin position="257"/>
        <end position="259"/>
    </location>
</feature>
<feature type="helix" evidence="25">
    <location>
        <begin position="265"/>
        <end position="269"/>
    </location>
</feature>
<feature type="strand" evidence="25">
    <location>
        <begin position="276"/>
        <end position="279"/>
    </location>
</feature>
<feature type="turn" evidence="25">
    <location>
        <begin position="280"/>
        <end position="282"/>
    </location>
</feature>
<feature type="strand" evidence="25">
    <location>
        <begin position="285"/>
        <end position="290"/>
    </location>
</feature>
<feature type="turn" evidence="25">
    <location>
        <begin position="292"/>
        <end position="294"/>
    </location>
</feature>
<feature type="strand" evidence="25">
    <location>
        <begin position="296"/>
        <end position="301"/>
    </location>
</feature>
<feature type="strand" evidence="25">
    <location>
        <begin position="315"/>
        <end position="318"/>
    </location>
</feature>
<feature type="strand" evidence="25">
    <location>
        <begin position="323"/>
        <end position="327"/>
    </location>
</feature>
<feature type="strand" evidence="25">
    <location>
        <begin position="335"/>
        <end position="340"/>
    </location>
</feature>
<feature type="strand" evidence="25">
    <location>
        <begin position="348"/>
        <end position="354"/>
    </location>
</feature>
<feature type="helix" evidence="25">
    <location>
        <begin position="360"/>
        <end position="362"/>
    </location>
</feature>
<feature type="strand" evidence="25">
    <location>
        <begin position="364"/>
        <end position="368"/>
    </location>
</feature>
<feature type="strand" evidence="25">
    <location>
        <begin position="375"/>
        <end position="380"/>
    </location>
</feature>
<feature type="helix" evidence="25">
    <location>
        <begin position="381"/>
        <end position="383"/>
    </location>
</feature>
<feature type="strand" evidence="25">
    <location>
        <begin position="388"/>
        <end position="393"/>
    </location>
</feature>
<feature type="strand" evidence="26">
    <location>
        <begin position="398"/>
        <end position="401"/>
    </location>
</feature>
<feature type="strand" evidence="25">
    <location>
        <begin position="404"/>
        <end position="410"/>
    </location>
</feature>
<feature type="strand" evidence="25">
    <location>
        <begin position="415"/>
        <end position="423"/>
    </location>
</feature>
<feature type="helix" evidence="25">
    <location>
        <begin position="429"/>
        <end position="432"/>
    </location>
</feature>
<feature type="strand" evidence="25">
    <location>
        <begin position="441"/>
        <end position="443"/>
    </location>
</feature>
<feature type="strand" evidence="25">
    <location>
        <begin position="447"/>
        <end position="450"/>
    </location>
</feature>
<feature type="strand" evidence="25">
    <location>
        <begin position="453"/>
        <end position="457"/>
    </location>
</feature>
<feature type="strand" evidence="25">
    <location>
        <begin position="463"/>
        <end position="466"/>
    </location>
</feature>
<feature type="strand" evidence="25">
    <location>
        <begin position="472"/>
        <end position="476"/>
    </location>
</feature>
<feature type="turn" evidence="25">
    <location>
        <begin position="477"/>
        <end position="479"/>
    </location>
</feature>
<feature type="strand" evidence="25">
    <location>
        <begin position="481"/>
        <end position="487"/>
    </location>
</feature>
<feature type="strand" evidence="25">
    <location>
        <begin position="490"/>
        <end position="495"/>
    </location>
</feature>
<feature type="strand" evidence="25">
    <location>
        <begin position="502"/>
        <end position="508"/>
    </location>
</feature>
<feature type="strand" evidence="25">
    <location>
        <begin position="510"/>
        <end position="512"/>
    </location>
</feature>
<feature type="helix" evidence="25">
    <location>
        <begin position="522"/>
        <end position="524"/>
    </location>
</feature>
<feature type="strand" evidence="25">
    <location>
        <begin position="525"/>
        <end position="529"/>
    </location>
</feature>
<feature type="strand" evidence="25">
    <location>
        <begin position="543"/>
        <end position="548"/>
    </location>
</feature>
<feature type="turn" evidence="25">
    <location>
        <begin position="549"/>
        <end position="551"/>
    </location>
</feature>
<feature type="strand" evidence="25">
    <location>
        <begin position="554"/>
        <end position="558"/>
    </location>
</feature>
<feature type="turn" evidence="25">
    <location>
        <begin position="562"/>
        <end position="565"/>
    </location>
</feature>
<feature type="strand" evidence="25">
    <location>
        <begin position="567"/>
        <end position="571"/>
    </location>
</feature>
<feature type="strand" evidence="25">
    <location>
        <begin position="576"/>
        <end position="579"/>
    </location>
</feature>
<feature type="turn" evidence="25">
    <location>
        <begin position="586"/>
        <end position="589"/>
    </location>
</feature>
<sequence>MPNPVRFVYRVDLRSPEEIFEHGFSTLGDVRNFFEHILSTNFGRSYFISTSETPTAAIRFFGSWLREYVPEHPRRAYLYEIRADQHFYNARATGENLLDLMRQRQVVFDSGDREMAQMGIRALRTSFAYQREWFTDGPIAAANVRSAWLVDAVPVEPGHAHHPAGRVVETTRINEPEMHNPHYQELQTQANDQPWLPTPGIATPVHLSIPQAASVADVSEGTSASLSFACPDWSPPSSNGENPLDKCIAEKIDNYNLQSLPQYASSVKELEDTPVYLRGIKTQKTFMLQADPQNNNVFLVEVNPKQKSSFPQTIFFWDVYQRICLKDLTGAQISLSLTAFTTQYAGQLKVHLSVSAVNAVNQKWKMTPQDIAITQFRVSSELLGQTENGLFWNTKSGGSQHDLYVCPLKNPPSDLEELQIIVDECTTHAQFVTMRAASTFFVDVQLGWYWRGYYYTPQLSGWSYQMKTPDGQIFYDLKTSKIFFVQDNQNVFFLHNKLNKQTGYSWDWVEWLKHDMNEDKDENFKWYFSRDDLTIPSVEGLNFRHIRCYADNQQLKVIISGSRWGGWYSTYDKVESNVEDKILVKDGFDRF</sequence>
<comment type="function">
    <text evidence="2 3 8 10 11 12 13 14">The main virulence factor for this bacteria, a mono-ADP-ribosylating toxin (mART), that transfers the ADP-ribosyl group from NAD(+) to multiple target proteins in vitro (PubMed:16617115, PubMed:24948331, PubMed:25538194, PubMed:29362229, PubMed:30977272, PubMed:34078958). Also elicits cytopathic effects in mammalian cells, such as disorganization and disruption of respiratory epithelial integrity in tracheal epithelium and vacuolization in the cytoplasm of CHO and HeLa cells as well as in mice and baboons (PubMed:16617115, PubMed:19859545, PubMed:24948331, PubMed:29362229, PubMed:30977272, PubMed:34078958). Treatment of mice or baboons with CARDS elicits a response that is consistent with human M.pneumoniae infections and mouse models of both infection and intoxication, suggesting that CARDS toxin is sufficient to cause prolonged inflammatory responses and airway dysfunction. Treatment of baboons with CARDS induces a number of cytokines; G-CSF (40 fold), IL-1Ra (10 fold), IL-6 and IL-8 (333 and 100 fold, respectively), MIP-1a (5 fold), and RANTES (9 fold). Treatment of mice gives a similar response (PubMed:19859545). Binds phosphatidyl choline, dipalmitoylphosphatidylcholine (DPPC) and sphingomyelin via domains D2 plus D3 (PubMed:25848012).</text>
</comment>
<comment type="function">
    <text evidence="1 7 9 12 14">Has at least 2 host receptors SFTPA1 (PubMed:15845487) and ANXA2 (PubMed:15845487, PubMed:25139904). Internalized by a clathrin-mediated process; protein is rapidly taken up at 37 degrees Celsius. Clathrin-independent or caveolin-dependent endocytosis were not detected (PubMed:23667510). In HeLa cells internalized CARDS trafficks toward the nucleus by retrograde transport from early to late endosomes, then the Golgi apparatus; at 16 hours most toxin is concentrated in the perinuclear region in the host endoplasmic reticulum (ER). Failure to localize to the host ER prevents ADP-ribosylation and vacuolization (PubMed:29362229). An acidic compartment is required to mediate retrotransport and processing of toxin into an N-terminal fragment with mART activity and a C-terminal fragment that is able to induce vacuolization (PubMed:34078958).</text>
</comment>
<comment type="function">
    <text evidence="10 19">Induces the host NLRP3 inflammasome to release interleukin-1 beta (IL-1 beta); IL-1 beta release requires ADP-ribosylation activity and uptake by host macrophages. In the host colocalizes with the NLRP3 inflammasome; ADP-ribosylates NLRP3 in vitro (PubMed:25538194). ADP-ribosylation of NLRP3 may lead to hyperinflammation (Probable).</text>
</comment>
<comment type="activity regulation">
    <text evidence="2">In vitro ADP-ribosylation is enhanced by dithiotheritol.</text>
</comment>
<comment type="subunit">
    <text evidence="1 9 10 20">Monomer (Probable). Binds to host (human) pulmonary surfactant-associated protein A1 (SFTPA1), the major mammalian protein component of pulmonary surfactant (PubMed:15845487). Binds to host (human) surface annexin A2 (ANXA2) on the cell surface; anti-ANXA2 antibodies decrease binding to cells (PubMed:25139904). Interacts with cytosolic host (human) NLRP3, which it ADP-ribosylates in vitro (PubMed:25538194).</text>
</comment>
<comment type="interaction">
    <interactant intactId="EBI-2259548">
        <id>P75409</id>
    </interactant>
    <interactant intactId="EBI-352622">
        <id>P07355</id>
        <label>ANXA2</label>
    </interactant>
    <organismsDiffer>true</organismsDiffer>
    <experiments>6</experiments>
</comment>
<comment type="interaction">
    <interactant intactId="EBI-2259548">
        <id>P75409</id>
    </interactant>
    <interactant intactId="EBI-11316418">
        <id>Q8IWL2</id>
        <label>SFTPA1</label>
    </interactant>
    <organismsDiffer>true</organismsDiffer>
    <experiments>2</experiments>
</comment>
<comment type="subcellular location">
    <subcellularLocation>
        <location evidence="2 4">Cell membrane</location>
    </subcellularLocation>
    <subcellularLocation>
        <location evidence="2 4">Cytoplasm</location>
    </subcellularLocation>
    <subcellularLocation>
        <location evidence="1 4">Cell surface</location>
    </subcellularLocation>
    <subcellularLocation>
        <location evidence="4">Cell projection</location>
        <location evidence="4">Attachment organelle</location>
    </subcellularLocation>
    <subcellularLocation>
        <location evidence="10">Host cytoplasm</location>
        <location evidence="10">Host cytosol</location>
    </subcellularLocation>
    <subcellularLocation>
        <location evidence="12 14">Host endoplasmic reticulum</location>
    </subcellularLocation>
    <text evidence="4 10 12 14">In bacteria most protein is cytoplasmic, 7-10% is on cell surface, including in the tip (attachment) organelle (PubMed:20199607). In host cells is found in the cytosol and in a punctate pattern in the perinuclear region in the host ER (PubMed:25538194, PubMed:29362229, PubMed:34078958). In host cells, an isolated C-terminal fragment (residues 273-591) is detected in a larger punctate pattern (PubMed:34078958). In 10% of host cells colocalizes with the speck NLRP3 inflammasome complex (purified protein incubated with mouse macrophages) (PubMed:25538194).</text>
</comment>
<comment type="induction">
    <text evidence="4 5">In strain S1 (grown in vitro in SP-4 broth), low expression, higher expression in the presence of mammalian cells. In vitro expressed at low levels in early- and mid-log phase, transcription decreases about 130-fold by stationary phase. In vitro protein levels peak between 24-48 hours then decrease by 60 hours, remaining constant until at least 144 hours (at protein level). In the presence of HeLa cells and in infected mice, mRNA is detected at higher levels within 15 minutes, after 38 hours infection protein can be detected inside normal human bronchial epithelial (NHBE) cells (at protein level) (PubMed:20199607). Upon infection of female BALB/c mice, strain S1 shows significantly higher expression of CARDS in bronchoalveolar lavage than strains M129-B7 or M129-B9 which have little detectable protein; S1 expression is highest 1 day after infection and remains detectable until at least 10 days post-infection (at protein level) (PubMed:20508214).</text>
</comment>
<comment type="domain">
    <text evidence="8 9 11 14">The N-terminus (up to about residue 249) has mART activity, as well as NADase activity. The C-terminal 41 residues are required for internalization by HeLa cells and for vacuolization (PubMed:24948331). The C-terminus (residues 266-591) is required for interaction with annexin A2 (PubMed:25139904). Has 3 structural domains, the N-terminal mART domain (mono-ADP ribosyltransferase, residues 1-205), D2 (residues 273-439) and D3 (residues 440-591). mART is joined to D2 by a linker (residues 257-272) which has a disulfide bond. The 3 domains assemble into an isosceles triangle, where the probable active site and NAD(+)-binding site are occulded. Enzyme activity will require either a conformation change or proteolytic processing. Domain D2 and D3 together bind lipids, domain D3 is at least partially responsible for binding to and internalization by host cells (PubMed:25848012). A C-terminal fragment (residues 273-591) is capable of inducing vacuolization upon incubation with HeLa cells (PubMed:34078958).</text>
</comment>
<comment type="PTM">
    <text evidence="8 13 14">8 hours after treatment of HeLa cells with purified protein, a substantial amount is processed to 2 nearly equal-sized fragments (PubMed:30977272, PubMed:34078958). The disulfide bond between Cys-230 and Cys-247 is required to for the toxin to exert its mART and vacuolating activities within target cells, and for protein processing (PubMed:30977272). Acidic pH in the endosome and retrograde transport are required for toxin cleavage, which is required for both toxin activities (PubMed:34078958). Trypsin treatment under mild conditions leads to cleavage at Lys-305 and Lys-307; the 2 proteins fragments remain associated and can be internalized and vacuolate HeLa cells (PubMed:24948331).</text>
</comment>
<comment type="disruption phenotype">
    <text evidence="6">Among 102 tested antibiotic-resistant transformants, none had a deleted gene.</text>
</comment>
<comment type="miscellaneous">
    <text evidence="2">Provokes a strong immune reaction in infected patients.</text>
</comment>
<comment type="miscellaneous">
    <text evidence="18">In a mouse infection model, pulmonary disease severity correlates with the expression level of CARDS toxin; strain S1 produces the highest amount of protein among the tested strains (S1 / Subtype 2, M129-B7 / Subtype 1 and M129-B9 / Subtype 1) and the most severe infection. Other differences between the strains were not explored in this study.</text>
</comment>
<comment type="similarity">
    <text evidence="17">Belongs to the bacterial exotoxin subunit A family.</text>
</comment>
<protein>
    <recommendedName>
        <fullName evidence="15">ADP-ribosylating toxin CARDS</fullName>
        <ecNumber evidence="13">2.4.2.-</ecNumber>
    </recommendedName>
    <alternativeName>
        <fullName>ADP-ribosyltransferase CARDS</fullName>
    </alternativeName>
    <alternativeName>
        <fullName evidence="15">Community-Acquired Respiratory Distress Syndrome Toxin</fullName>
        <shortName evidence="15">CARDX TX</shortName>
    </alternativeName>
</protein>
<proteinExistence type="evidence at protein level"/>